<dbReference type="EC" id="5.6.2.2" evidence="1"/>
<dbReference type="EMBL" id="AJ235271">
    <property type="protein sequence ID" value="CAA14690.1"/>
    <property type="molecule type" value="Genomic_DNA"/>
</dbReference>
<dbReference type="PIR" id="H71676">
    <property type="entry name" value="H71676"/>
</dbReference>
<dbReference type="RefSeq" id="NP_220613.1">
    <property type="nucleotide sequence ID" value="NC_000963.1"/>
</dbReference>
<dbReference type="RefSeq" id="WP_004598566.1">
    <property type="nucleotide sequence ID" value="NC_000963.1"/>
</dbReference>
<dbReference type="SMR" id="Q9ZDU7"/>
<dbReference type="STRING" id="272947.gene:17555308"/>
<dbReference type="EnsemblBacteria" id="CAA14690">
    <property type="protein sequence ID" value="CAA14690"/>
    <property type="gene ID" value="CAA14690"/>
</dbReference>
<dbReference type="GeneID" id="57569355"/>
<dbReference type="KEGG" id="rpr:RP227"/>
<dbReference type="PATRIC" id="fig|272947.5.peg.235"/>
<dbReference type="eggNOG" id="COG0187">
    <property type="taxonomic scope" value="Bacteria"/>
</dbReference>
<dbReference type="HOGENOM" id="CLU_006146_4_1_5"/>
<dbReference type="OrthoDB" id="9802808at2"/>
<dbReference type="Proteomes" id="UP000002480">
    <property type="component" value="Chromosome"/>
</dbReference>
<dbReference type="GO" id="GO:0005694">
    <property type="term" value="C:chromosome"/>
    <property type="evidence" value="ECO:0007669"/>
    <property type="project" value="InterPro"/>
</dbReference>
<dbReference type="GO" id="GO:0005524">
    <property type="term" value="F:ATP binding"/>
    <property type="evidence" value="ECO:0007669"/>
    <property type="project" value="UniProtKB-UniRule"/>
</dbReference>
<dbReference type="GO" id="GO:0003677">
    <property type="term" value="F:DNA binding"/>
    <property type="evidence" value="ECO:0007669"/>
    <property type="project" value="UniProtKB-UniRule"/>
</dbReference>
<dbReference type="GO" id="GO:0003918">
    <property type="term" value="F:DNA topoisomerase type II (double strand cut, ATP-hydrolyzing) activity"/>
    <property type="evidence" value="ECO:0007669"/>
    <property type="project" value="UniProtKB-UniRule"/>
</dbReference>
<dbReference type="GO" id="GO:0046872">
    <property type="term" value="F:metal ion binding"/>
    <property type="evidence" value="ECO:0007669"/>
    <property type="project" value="UniProtKB-KW"/>
</dbReference>
<dbReference type="GO" id="GO:0007059">
    <property type="term" value="P:chromosome segregation"/>
    <property type="evidence" value="ECO:0007669"/>
    <property type="project" value="UniProtKB-UniRule"/>
</dbReference>
<dbReference type="GO" id="GO:0006265">
    <property type="term" value="P:DNA topological change"/>
    <property type="evidence" value="ECO:0007669"/>
    <property type="project" value="UniProtKB-UniRule"/>
</dbReference>
<dbReference type="CDD" id="cd16928">
    <property type="entry name" value="HATPase_GyrB-like"/>
    <property type="match status" value="1"/>
</dbReference>
<dbReference type="CDD" id="cd00822">
    <property type="entry name" value="TopoII_Trans_DNA_gyrase"/>
    <property type="match status" value="1"/>
</dbReference>
<dbReference type="FunFam" id="3.40.50.670:FF:000006">
    <property type="entry name" value="DNA topoisomerase (ATP-hydrolyzing)"/>
    <property type="match status" value="1"/>
</dbReference>
<dbReference type="Gene3D" id="3.30.230.10">
    <property type="match status" value="1"/>
</dbReference>
<dbReference type="Gene3D" id="3.40.50.670">
    <property type="match status" value="1"/>
</dbReference>
<dbReference type="Gene3D" id="3.30.565.10">
    <property type="entry name" value="Histidine kinase-like ATPase, C-terminal domain"/>
    <property type="match status" value="1"/>
</dbReference>
<dbReference type="HAMAP" id="MF_00938">
    <property type="entry name" value="ParE_type1"/>
    <property type="match status" value="1"/>
</dbReference>
<dbReference type="InterPro" id="IPR002288">
    <property type="entry name" value="DNA_gyrase_B_C"/>
</dbReference>
<dbReference type="InterPro" id="IPR036890">
    <property type="entry name" value="HATPase_C_sf"/>
</dbReference>
<dbReference type="InterPro" id="IPR020568">
    <property type="entry name" value="Ribosomal_Su5_D2-typ_SF"/>
</dbReference>
<dbReference type="InterPro" id="IPR014721">
    <property type="entry name" value="Ribsml_uS5_D2-typ_fold_subgr"/>
</dbReference>
<dbReference type="InterPro" id="IPR001241">
    <property type="entry name" value="Topo_IIA"/>
</dbReference>
<dbReference type="InterPro" id="IPR013760">
    <property type="entry name" value="Topo_IIA-like_dom_sf"/>
</dbReference>
<dbReference type="InterPro" id="IPR000565">
    <property type="entry name" value="Topo_IIA_B"/>
</dbReference>
<dbReference type="InterPro" id="IPR013759">
    <property type="entry name" value="Topo_IIA_B_C"/>
</dbReference>
<dbReference type="InterPro" id="IPR013506">
    <property type="entry name" value="Topo_IIA_bsu_dom2"/>
</dbReference>
<dbReference type="InterPro" id="IPR018522">
    <property type="entry name" value="TopoIIA_CS"/>
</dbReference>
<dbReference type="InterPro" id="IPR005737">
    <property type="entry name" value="TopoIV_B_Gneg"/>
</dbReference>
<dbReference type="InterPro" id="IPR006171">
    <property type="entry name" value="TOPRIM_dom"/>
</dbReference>
<dbReference type="NCBIfam" id="TIGR01055">
    <property type="entry name" value="parE_Gneg"/>
    <property type="match status" value="1"/>
</dbReference>
<dbReference type="PANTHER" id="PTHR45866:SF1">
    <property type="entry name" value="DNA GYRASE SUBUNIT B, MITOCHONDRIAL"/>
    <property type="match status" value="1"/>
</dbReference>
<dbReference type="PANTHER" id="PTHR45866">
    <property type="entry name" value="DNA GYRASE/TOPOISOMERASE SUBUNIT B"/>
    <property type="match status" value="1"/>
</dbReference>
<dbReference type="Pfam" id="PF00204">
    <property type="entry name" value="DNA_gyraseB"/>
    <property type="match status" value="1"/>
</dbReference>
<dbReference type="Pfam" id="PF00986">
    <property type="entry name" value="DNA_gyraseB_C"/>
    <property type="match status" value="1"/>
</dbReference>
<dbReference type="Pfam" id="PF02518">
    <property type="entry name" value="HATPase_c"/>
    <property type="match status" value="1"/>
</dbReference>
<dbReference type="Pfam" id="PF01751">
    <property type="entry name" value="Toprim"/>
    <property type="match status" value="1"/>
</dbReference>
<dbReference type="PRINTS" id="PR01159">
    <property type="entry name" value="DNAGYRASEB"/>
</dbReference>
<dbReference type="PRINTS" id="PR00418">
    <property type="entry name" value="TPI2FAMILY"/>
</dbReference>
<dbReference type="SMART" id="SM00387">
    <property type="entry name" value="HATPase_c"/>
    <property type="match status" value="1"/>
</dbReference>
<dbReference type="SMART" id="SM00433">
    <property type="entry name" value="TOP2c"/>
    <property type="match status" value="1"/>
</dbReference>
<dbReference type="SUPFAM" id="SSF55874">
    <property type="entry name" value="ATPase domain of HSP90 chaperone/DNA topoisomerase II/histidine kinase"/>
    <property type="match status" value="1"/>
</dbReference>
<dbReference type="SUPFAM" id="SSF54211">
    <property type="entry name" value="Ribosomal protein S5 domain 2-like"/>
    <property type="match status" value="1"/>
</dbReference>
<dbReference type="SUPFAM" id="SSF56719">
    <property type="entry name" value="Type II DNA topoisomerase"/>
    <property type="match status" value="1"/>
</dbReference>
<dbReference type="PROSITE" id="PS00177">
    <property type="entry name" value="TOPOISOMERASE_II"/>
    <property type="match status" value="1"/>
</dbReference>
<dbReference type="PROSITE" id="PS50880">
    <property type="entry name" value="TOPRIM"/>
    <property type="match status" value="1"/>
</dbReference>
<name>PARE_RICPR</name>
<accession>Q9ZDU7</accession>
<protein>
    <recommendedName>
        <fullName evidence="1">DNA topoisomerase 4 subunit B</fullName>
        <ecNumber evidence="1">5.6.2.2</ecNumber>
    </recommendedName>
    <alternativeName>
        <fullName evidence="1">Topoisomerase IV subunit B</fullName>
    </alternativeName>
</protein>
<organism>
    <name type="scientific">Rickettsia prowazekii (strain Madrid E)</name>
    <dbReference type="NCBI Taxonomy" id="272947"/>
    <lineage>
        <taxon>Bacteria</taxon>
        <taxon>Pseudomonadati</taxon>
        <taxon>Pseudomonadota</taxon>
        <taxon>Alphaproteobacteria</taxon>
        <taxon>Rickettsiales</taxon>
        <taxon>Rickettsiaceae</taxon>
        <taxon>Rickettsieae</taxon>
        <taxon>Rickettsia</taxon>
        <taxon>typhus group</taxon>
    </lineage>
</organism>
<comment type="function">
    <text evidence="1">Topoisomerase IV is essential for chromosome segregation. It relaxes supercoiled DNA. Performs the decatenation events required during the replication of a circular DNA molecule.</text>
</comment>
<comment type="catalytic activity">
    <reaction evidence="1">
        <text>ATP-dependent breakage, passage and rejoining of double-stranded DNA.</text>
        <dbReference type="EC" id="5.6.2.2"/>
    </reaction>
</comment>
<comment type="cofactor">
    <cofactor evidence="1">
        <name>Mg(2+)</name>
        <dbReference type="ChEBI" id="CHEBI:18420"/>
    </cofactor>
    <cofactor evidence="1">
        <name>Mn(2+)</name>
        <dbReference type="ChEBI" id="CHEBI:29035"/>
    </cofactor>
    <cofactor evidence="1">
        <name>Ca(2+)</name>
        <dbReference type="ChEBI" id="CHEBI:29108"/>
    </cofactor>
    <text evidence="1">Binds two Mg(2+) per subunit. The magnesium ions form salt bridges with both the protein and the DNA. Can also accept other divalent metal cations, such as Mn(2+) or Ca(2+).</text>
</comment>
<comment type="subunit">
    <text evidence="1">Heterotetramer composed of ParC and ParE.</text>
</comment>
<comment type="similarity">
    <text evidence="1">Belongs to the type II topoisomerase family. ParE type 1 subfamily.</text>
</comment>
<feature type="chain" id="PRO_0000273119" description="DNA topoisomerase 4 subunit B">
    <location>
        <begin position="1"/>
        <end position="662"/>
    </location>
</feature>
<feature type="domain" description="Toprim" evidence="1">
    <location>
        <begin position="439"/>
        <end position="553"/>
    </location>
</feature>
<feature type="binding site" evidence="1">
    <location>
        <position position="20"/>
    </location>
    <ligand>
        <name>ATP</name>
        <dbReference type="ChEBI" id="CHEBI:30616"/>
    </ligand>
</feature>
<feature type="binding site" evidence="1">
    <location>
        <position position="60"/>
    </location>
    <ligand>
        <name>ATP</name>
        <dbReference type="ChEBI" id="CHEBI:30616"/>
    </ligand>
</feature>
<feature type="binding site" evidence="1">
    <location>
        <position position="87"/>
    </location>
    <ligand>
        <name>ATP</name>
        <dbReference type="ChEBI" id="CHEBI:30616"/>
    </ligand>
</feature>
<feature type="binding site" evidence="1">
    <location>
        <begin position="129"/>
        <end position="135"/>
    </location>
    <ligand>
        <name>ATP</name>
        <dbReference type="ChEBI" id="CHEBI:30616"/>
    </ligand>
</feature>
<feature type="binding site" evidence="1">
    <location>
        <position position="359"/>
    </location>
    <ligand>
        <name>ATP</name>
        <dbReference type="ChEBI" id="CHEBI:30616"/>
    </ligand>
</feature>
<feature type="binding site" evidence="1">
    <location>
        <position position="445"/>
    </location>
    <ligand>
        <name>Mg(2+)</name>
        <dbReference type="ChEBI" id="CHEBI:18420"/>
        <label>1</label>
        <note>catalytic</note>
    </ligand>
</feature>
<feature type="binding site" evidence="1">
    <location>
        <position position="518"/>
    </location>
    <ligand>
        <name>Mg(2+)</name>
        <dbReference type="ChEBI" id="CHEBI:18420"/>
        <label>1</label>
        <note>catalytic</note>
    </ligand>
</feature>
<feature type="binding site" evidence="1">
    <location>
        <position position="518"/>
    </location>
    <ligand>
        <name>Mg(2+)</name>
        <dbReference type="ChEBI" id="CHEBI:18420"/>
        <label>2</label>
    </ligand>
</feature>
<feature type="binding site" evidence="1">
    <location>
        <position position="520"/>
    </location>
    <ligand>
        <name>Mg(2+)</name>
        <dbReference type="ChEBI" id="CHEBI:18420"/>
        <label>2</label>
    </ligand>
</feature>
<feature type="site" description="Interaction with DNA" evidence="1">
    <location>
        <position position="470"/>
    </location>
</feature>
<feature type="site" description="Interaction with DNA" evidence="1">
    <location>
        <position position="473"/>
    </location>
</feature>
<feature type="site" description="Interaction with DNA" evidence="1">
    <location>
        <position position="525"/>
    </location>
</feature>
<feature type="site" description="Interaction with DNA" evidence="1">
    <location>
        <position position="641"/>
    </location>
</feature>
<keyword id="KW-0067">ATP-binding</keyword>
<keyword id="KW-0238">DNA-binding</keyword>
<keyword id="KW-0413">Isomerase</keyword>
<keyword id="KW-0460">Magnesium</keyword>
<keyword id="KW-0479">Metal-binding</keyword>
<keyword id="KW-0547">Nucleotide-binding</keyword>
<keyword id="KW-1185">Reference proteome</keyword>
<keyword id="KW-0799">Topoisomerase</keyword>
<reference key="1">
    <citation type="journal article" date="1998" name="Nature">
        <title>The genome sequence of Rickettsia prowazekii and the origin of mitochondria.</title>
        <authorList>
            <person name="Andersson S.G.E."/>
            <person name="Zomorodipour A."/>
            <person name="Andersson J.O."/>
            <person name="Sicheritz-Ponten T."/>
            <person name="Alsmark U.C.M."/>
            <person name="Podowski R.M."/>
            <person name="Naeslund A.K."/>
            <person name="Eriksson A.-S."/>
            <person name="Winkler H.H."/>
            <person name="Kurland C.G."/>
        </authorList>
    </citation>
    <scope>NUCLEOTIDE SEQUENCE [LARGE SCALE GENOMIC DNA]</scope>
    <source>
        <strain>Madrid E</strain>
    </source>
</reference>
<sequence>MSDLFSLNKEKKNKIVYTNYSAKDIEVLDGLEPVRKRPGMYIGGTDSNAMHHLVSEVLDNAMDEAVAGFASIIMIKMHQDHSITIFDNGRGIPIDNHPKFPDKSALEVILTTLHSGSKFSNNVYHTSGGLHGVGISVVNALSKHFKIKVYKQGKLYSQSYSKGAKLTDLISAEASKRLRGTSINFTPDPEIFSEKLHFNPKKIYEIARSKAYLYRGVSIEWECEVEVPSDIPKKALINFPNGLKDYLSSKISLDNLVIPEIFSGNIESTVDDIKLEWAICWQNNDTSAFMQSYCNTVPTPQGGTHEQGLKSAILRGLKAYSEMIGNKKAANLTIEDILETASIVLSIFIVEPSFQGQTKEKLVSNGVSKLVENIIKDHFDHFLSSDKVLATHLLEHVIAIAEFRRNKKNERNISRKSVTQKLRLPGKLADCTRTSAEGTELFIVEGDSAGGSAKQARNRETQAVLPLWGKVLNVASSTLEKIINNQAIQDLEIALACGSLKNYKKENLRYEKIIIMTDADVDGAHIASLLMTFFFLRMPKLVEEGHLYLAKPPLYRLTQSNKIYYACDEEEKIKLTYKLSKASKAKIEVGRFKGLGEMMPAQLKETTMHPEKRSLLKVTLEDVQNVDKIVDDLMGKKPEKRFQFIYEQALVKMDQIINKLDI</sequence>
<evidence type="ECO:0000255" key="1">
    <source>
        <dbReference type="HAMAP-Rule" id="MF_00938"/>
    </source>
</evidence>
<proteinExistence type="inferred from homology"/>
<gene>
    <name evidence="1" type="primary">parE</name>
    <name type="ordered locus">RP227</name>
</gene>